<name>RSAKS_PSESP</name>
<feature type="signal peptide" evidence="1">
    <location>
        <begin position="1"/>
        <end position="28"/>
    </location>
</feature>
<feature type="chain" id="PRO_5005678730" description="(R)-specific secondary-alkylsulfatase">
    <location>
        <begin position="29"/>
        <end position="663"/>
    </location>
</feature>
<feature type="binding site" evidence="3 9 10 11">
    <location>
        <position position="179"/>
    </location>
    <ligand>
        <name>Zn(2+)</name>
        <dbReference type="ChEBI" id="CHEBI:29105"/>
        <label>1</label>
    </ligand>
</feature>
<feature type="binding site" evidence="3 9 10 11">
    <location>
        <position position="181"/>
    </location>
    <ligand>
        <name>Zn(2+)</name>
        <dbReference type="ChEBI" id="CHEBI:29105"/>
        <label>1</label>
    </ligand>
</feature>
<feature type="binding site" evidence="3 9 10 11">
    <location>
        <position position="183"/>
    </location>
    <ligand>
        <name>Zn(2+)</name>
        <dbReference type="ChEBI" id="CHEBI:29105"/>
        <label>2</label>
    </ligand>
</feature>
<feature type="binding site" evidence="3 9 10 11">
    <location>
        <position position="184"/>
    </location>
    <ligand>
        <name>Zn(2+)</name>
        <dbReference type="ChEBI" id="CHEBI:29105"/>
        <label>2</label>
    </ligand>
</feature>
<feature type="binding site" evidence="3 9 10 11">
    <location>
        <position position="232"/>
    </location>
    <ligand>
        <name>sulfate</name>
        <dbReference type="ChEBI" id="CHEBI:16189"/>
    </ligand>
</feature>
<feature type="binding site" evidence="3 9 10 11">
    <location>
        <position position="291"/>
    </location>
    <ligand>
        <name>Zn(2+)</name>
        <dbReference type="ChEBI" id="CHEBI:29105"/>
        <label>1</label>
    </ligand>
</feature>
<feature type="binding site" evidence="3 9 10 11">
    <location>
        <position position="310"/>
    </location>
    <ligand>
        <name>Zn(2+)</name>
        <dbReference type="ChEBI" id="CHEBI:29105"/>
        <label>1</label>
    </ligand>
</feature>
<feature type="binding site" evidence="3 9 10 11">
    <location>
        <position position="310"/>
    </location>
    <ligand>
        <name>Zn(2+)</name>
        <dbReference type="ChEBI" id="CHEBI:29105"/>
        <label>2</label>
    </ligand>
</feature>
<feature type="binding site" evidence="3 9 10 11">
    <location>
        <begin position="318"/>
        <end position="323"/>
    </location>
    <ligand>
        <name>sulfate</name>
        <dbReference type="ChEBI" id="CHEBI:16189"/>
    </ligand>
</feature>
<feature type="binding site" evidence="3 9 10 11">
    <location>
        <position position="328"/>
    </location>
    <ligand>
        <name>sulfate</name>
        <dbReference type="ChEBI" id="CHEBI:16189"/>
    </ligand>
</feature>
<feature type="binding site" evidence="3 9 10 11">
    <location>
        <position position="355"/>
    </location>
    <ligand>
        <name>Zn(2+)</name>
        <dbReference type="ChEBI" id="CHEBI:29105"/>
        <label>2</label>
    </ligand>
</feature>
<feature type="binding site" evidence="3 9 10 11">
    <location>
        <position position="417"/>
    </location>
    <ligand>
        <name>sulfate</name>
        <dbReference type="ChEBI" id="CHEBI:16189"/>
    </ligand>
</feature>
<feature type="mutagenesis site" description="2.5-fold decrease in kcat with (R)-2-octyl sulfate as substrate. Cannot use (S)-2-octyl sulfate. Shows activity towards (S)-2-octyl sulfate; when associated with G-250." evidence="3">
    <original>S</original>
    <variation>Y</variation>
    <location>
        <position position="233"/>
    </location>
</feature>
<feature type="mutagenesis site" description="190-fold decrease in kcat with (R)-2-octyl sulfate as substrate. 28-fold increase in Km for (R)-2-octyl sulfate. Cannot use (S)-2-octyl sulfate. Shows activity towards (S)-2-octyl sulfate; when associated with Y-233." evidence="3">
    <original>F</original>
    <variation>G</variation>
    <location>
        <position position="250"/>
    </location>
</feature>
<feature type="mutagenesis site" description="1300-fold decrease in kcat with (R)-2-octyl sulfate as substrate." evidence="3">
    <original>H</original>
    <variation>A</variation>
    <location>
        <position position="317"/>
    </location>
</feature>
<feature type="mutagenesis site" description="Loss of activity." evidence="3">
    <original>Y</original>
    <variation>D</variation>
    <location>
        <position position="417"/>
    </location>
</feature>
<feature type="mutagenesis site" description="114-fold decrease in kcat with (R)-2-octyl sulfate as substrate. 65-fold increase in Km for (R)-2-octyl sulfate." evidence="3">
    <original>Y</original>
    <variation>F</variation>
    <location>
        <position position="417"/>
    </location>
</feature>
<feature type="mutagenesis site" description="238-fold decrease in kcat with (R)-2-octyl sulfate as substrate. 13-fold increase in Km for (R)-2-octyl sulfate." evidence="3">
    <original>Y</original>
    <variation>H</variation>
    <location>
        <position position="417"/>
    </location>
</feature>
<feature type="helix" evidence="12">
    <location>
        <begin position="39"/>
        <end position="50"/>
    </location>
</feature>
<feature type="turn" evidence="12">
    <location>
        <begin position="54"/>
        <end position="57"/>
    </location>
</feature>
<feature type="helix" evidence="12">
    <location>
        <begin position="58"/>
        <end position="64"/>
    </location>
</feature>
<feature type="strand" evidence="12">
    <location>
        <begin position="67"/>
        <end position="70"/>
    </location>
</feature>
<feature type="strand" evidence="12">
    <location>
        <begin position="73"/>
        <end position="76"/>
    </location>
</feature>
<feature type="strand" evidence="12">
    <location>
        <begin position="82"/>
        <end position="85"/>
    </location>
</feature>
<feature type="helix" evidence="12">
    <location>
        <begin position="86"/>
        <end position="92"/>
    </location>
</feature>
<feature type="helix" evidence="12">
    <location>
        <begin position="103"/>
        <end position="112"/>
    </location>
</feature>
<feature type="strand" evidence="12">
    <location>
        <begin position="116"/>
        <end position="121"/>
    </location>
</feature>
<feature type="strand" evidence="12">
    <location>
        <begin position="124"/>
        <end position="133"/>
    </location>
</feature>
<feature type="strand" evidence="12">
    <location>
        <begin position="135"/>
        <end position="139"/>
    </location>
</feature>
<feature type="strand" evidence="12">
    <location>
        <begin position="141"/>
        <end position="147"/>
    </location>
</feature>
<feature type="helix" evidence="12">
    <location>
        <begin position="153"/>
        <end position="164"/>
    </location>
</feature>
<feature type="strand" evidence="12">
    <location>
        <begin position="172"/>
        <end position="176"/>
    </location>
</feature>
<feature type="helix" evidence="12">
    <location>
        <begin position="182"/>
        <end position="185"/>
    </location>
</feature>
<feature type="helix" evidence="12">
    <location>
        <begin position="188"/>
        <end position="190"/>
    </location>
</feature>
<feature type="helix" evidence="12">
    <location>
        <begin position="194"/>
        <end position="198"/>
    </location>
</feature>
<feature type="strand" evidence="12">
    <location>
        <begin position="201"/>
        <end position="207"/>
    </location>
</feature>
<feature type="helix" evidence="12">
    <location>
        <begin position="210"/>
        <end position="218"/>
    </location>
</feature>
<feature type="turn" evidence="12">
    <location>
        <begin position="219"/>
        <end position="221"/>
    </location>
</feature>
<feature type="helix" evidence="12">
    <location>
        <begin position="222"/>
        <end position="233"/>
    </location>
</feature>
<feature type="strand" evidence="12">
    <location>
        <begin position="248"/>
        <end position="251"/>
    </location>
</feature>
<feature type="strand" evidence="12">
    <location>
        <begin position="265"/>
        <end position="268"/>
    </location>
</feature>
<feature type="strand" evidence="12">
    <location>
        <begin position="270"/>
        <end position="277"/>
    </location>
</feature>
<feature type="strand" evidence="12">
    <location>
        <begin position="280"/>
        <end position="286"/>
    </location>
</feature>
<feature type="strand" evidence="12">
    <location>
        <begin position="290"/>
        <end position="300"/>
    </location>
</feature>
<feature type="turn" evidence="12">
    <location>
        <begin position="301"/>
        <end position="304"/>
    </location>
</feature>
<feature type="strand" evidence="12">
    <location>
        <begin position="305"/>
        <end position="307"/>
    </location>
</feature>
<feature type="turn" evidence="12">
    <location>
        <begin position="309"/>
        <end position="311"/>
    </location>
</feature>
<feature type="helix" evidence="12">
    <location>
        <begin position="330"/>
        <end position="344"/>
    </location>
</feature>
<feature type="helix" evidence="12">
    <location>
        <begin position="345"/>
        <end position="347"/>
    </location>
</feature>
<feature type="strand" evidence="12">
    <location>
        <begin position="349"/>
        <end position="352"/>
    </location>
</feature>
<feature type="strand" evidence="12">
    <location>
        <begin position="354"/>
        <end position="356"/>
    </location>
</feature>
<feature type="strand" evidence="12">
    <location>
        <begin position="359"/>
        <end position="361"/>
    </location>
</feature>
<feature type="helix" evidence="12">
    <location>
        <begin position="362"/>
        <end position="388"/>
    </location>
</feature>
<feature type="helix" evidence="12">
    <location>
        <begin position="393"/>
        <end position="399"/>
    </location>
</feature>
<feature type="helix" evidence="12">
    <location>
        <begin position="405"/>
        <end position="409"/>
    </location>
</feature>
<feature type="helix" evidence="12">
    <location>
        <begin position="411"/>
        <end position="413"/>
    </location>
</feature>
<feature type="strand" evidence="12">
    <location>
        <begin position="414"/>
        <end position="418"/>
    </location>
</feature>
<feature type="helix" evidence="12">
    <location>
        <begin position="420"/>
        <end position="431"/>
    </location>
</feature>
<feature type="helix" evidence="12">
    <location>
        <begin position="439"/>
        <end position="441"/>
    </location>
</feature>
<feature type="helix" evidence="12">
    <location>
        <begin position="447"/>
        <end position="457"/>
    </location>
</feature>
<feature type="helix" evidence="12">
    <location>
        <begin position="460"/>
        <end position="474"/>
    </location>
</feature>
<feature type="helix" evidence="12">
    <location>
        <begin position="477"/>
        <end position="490"/>
    </location>
</feature>
<feature type="helix" evidence="12">
    <location>
        <begin position="495"/>
        <end position="511"/>
    </location>
</feature>
<feature type="helix" evidence="12">
    <location>
        <begin position="515"/>
        <end position="530"/>
    </location>
</feature>
<feature type="turn" evidence="13">
    <location>
        <begin position="537"/>
        <end position="540"/>
    </location>
</feature>
<feature type="helix" evidence="12">
    <location>
        <begin position="543"/>
        <end position="545"/>
    </location>
</feature>
<feature type="helix" evidence="12">
    <location>
        <begin position="549"/>
        <end position="559"/>
    </location>
</feature>
<feature type="helix" evidence="12">
    <location>
        <begin position="562"/>
        <end position="565"/>
    </location>
</feature>
<feature type="strand" evidence="12">
    <location>
        <begin position="570"/>
        <end position="576"/>
    </location>
</feature>
<feature type="turn" evidence="12">
    <location>
        <begin position="577"/>
        <end position="580"/>
    </location>
</feature>
<feature type="strand" evidence="12">
    <location>
        <begin position="581"/>
        <end position="588"/>
    </location>
</feature>
<feature type="strand" evidence="12">
    <location>
        <begin position="591"/>
        <end position="596"/>
    </location>
</feature>
<feature type="strand" evidence="12">
    <location>
        <begin position="604"/>
        <end position="609"/>
    </location>
</feature>
<feature type="helix" evidence="12">
    <location>
        <begin position="611"/>
        <end position="618"/>
    </location>
</feature>
<feature type="helix" evidence="12">
    <location>
        <begin position="624"/>
        <end position="629"/>
    </location>
</feature>
<feature type="strand" evidence="12">
    <location>
        <begin position="632"/>
        <end position="637"/>
    </location>
</feature>
<feature type="helix" evidence="12">
    <location>
        <begin position="639"/>
        <end position="647"/>
    </location>
</feature>
<feature type="strand" evidence="12">
    <location>
        <begin position="658"/>
        <end position="660"/>
    </location>
</feature>
<evidence type="ECO:0000255" key="1"/>
<evidence type="ECO:0000269" key="2">
    <source>
    </source>
</evidence>
<evidence type="ECO:0000269" key="3">
    <source>
    </source>
</evidence>
<evidence type="ECO:0000269" key="4">
    <source ref="2"/>
</evidence>
<evidence type="ECO:0000303" key="5">
    <source>
    </source>
</evidence>
<evidence type="ECO:0000303" key="6">
    <source>
    </source>
</evidence>
<evidence type="ECO:0000303" key="7">
    <source ref="2"/>
</evidence>
<evidence type="ECO:0000305" key="8"/>
<evidence type="ECO:0007744" key="9">
    <source>
        <dbReference type="PDB" id="2YHE"/>
    </source>
</evidence>
<evidence type="ECO:0007744" key="10">
    <source>
        <dbReference type="PDB" id="4AV7"/>
    </source>
</evidence>
<evidence type="ECO:0007744" key="11">
    <source>
        <dbReference type="PDB" id="4AXH"/>
    </source>
</evidence>
<evidence type="ECO:0007829" key="12">
    <source>
        <dbReference type="PDB" id="2YHE"/>
    </source>
</evidence>
<evidence type="ECO:0007829" key="13">
    <source>
        <dbReference type="PDB" id="4AV7"/>
    </source>
</evidence>
<dbReference type="EC" id="3.1.6.19" evidence="2 3 4"/>
<dbReference type="EMBL" id="FR850678">
    <property type="protein sequence ID" value="CCA63329.1"/>
    <property type="molecule type" value="Genomic_DNA"/>
</dbReference>
<dbReference type="PDB" id="2YHE">
    <property type="method" value="X-ray"/>
    <property type="resolution" value="2.70 A"/>
    <property type="chains" value="A/B/C/D/E/F=1-660"/>
</dbReference>
<dbReference type="PDB" id="4AV7">
    <property type="method" value="X-ray"/>
    <property type="resolution" value="3.00 A"/>
    <property type="chains" value="A/B/C/D/E/F=1-660"/>
</dbReference>
<dbReference type="PDB" id="4AXH">
    <property type="method" value="X-ray"/>
    <property type="resolution" value="2.70 A"/>
    <property type="chains" value="A/B=1-660"/>
</dbReference>
<dbReference type="PDBsum" id="2YHE"/>
<dbReference type="PDBsum" id="4AV7"/>
<dbReference type="PDBsum" id="4AXH"/>
<dbReference type="SMR" id="F8KAY7"/>
<dbReference type="MINT" id="F8KAY7"/>
<dbReference type="BRENDA" id="3.1.6.19">
    <property type="organism ID" value="17955"/>
</dbReference>
<dbReference type="EvolutionaryTrace" id="F8KAY7"/>
<dbReference type="GO" id="GO:0018741">
    <property type="term" value="F:linear primary-alkylsulfatase activity"/>
    <property type="evidence" value="ECO:0007669"/>
    <property type="project" value="InterPro"/>
</dbReference>
<dbReference type="GO" id="GO:0046872">
    <property type="term" value="F:metal ion binding"/>
    <property type="evidence" value="ECO:0007669"/>
    <property type="project" value="UniProtKB-KW"/>
</dbReference>
<dbReference type="GO" id="GO:0046983">
    <property type="term" value="F:protein dimerization activity"/>
    <property type="evidence" value="ECO:0007669"/>
    <property type="project" value="InterPro"/>
</dbReference>
<dbReference type="GO" id="GO:0018909">
    <property type="term" value="P:dodecyl sulfate metabolic process"/>
    <property type="evidence" value="ECO:0007669"/>
    <property type="project" value="InterPro"/>
</dbReference>
<dbReference type="CDD" id="cd07710">
    <property type="entry name" value="arylsulfatase_Sdsa1-like_MBL-fold"/>
    <property type="match status" value="1"/>
</dbReference>
<dbReference type="FunFam" id="3.60.15.30:FF:000001">
    <property type="entry name" value="Alkyl/aryl-sulfatase BDS1"/>
    <property type="match status" value="1"/>
</dbReference>
<dbReference type="Gene3D" id="1.25.40.880">
    <property type="entry name" value="Alkyl sulfatase, dimerisation domain"/>
    <property type="match status" value="1"/>
</dbReference>
<dbReference type="Gene3D" id="3.60.15.30">
    <property type="entry name" value="Metallo-beta-lactamase domain"/>
    <property type="match status" value="1"/>
</dbReference>
<dbReference type="Gene3D" id="3.30.1050.10">
    <property type="entry name" value="SCP2 sterol-binding domain"/>
    <property type="match status" value="1"/>
</dbReference>
<dbReference type="InterPro" id="IPR038536">
    <property type="entry name" value="Alkyl/aryl-sulf_dimr_sf"/>
</dbReference>
<dbReference type="InterPro" id="IPR029229">
    <property type="entry name" value="Alkyl_sulf_C"/>
</dbReference>
<dbReference type="InterPro" id="IPR029228">
    <property type="entry name" value="Alkyl_sulf_dimr"/>
</dbReference>
<dbReference type="InterPro" id="IPR052195">
    <property type="entry name" value="Bact_Alkyl/Aryl-Sulfatase"/>
</dbReference>
<dbReference type="InterPro" id="IPR044097">
    <property type="entry name" value="Bds1/SdsA1_MBL-fold"/>
</dbReference>
<dbReference type="InterPro" id="IPR001279">
    <property type="entry name" value="Metallo-B-lactamas"/>
</dbReference>
<dbReference type="InterPro" id="IPR036866">
    <property type="entry name" value="RibonucZ/Hydroxyglut_hydro"/>
</dbReference>
<dbReference type="InterPro" id="IPR036527">
    <property type="entry name" value="SCP2_sterol-bd_dom_sf"/>
</dbReference>
<dbReference type="PANTHER" id="PTHR43223">
    <property type="entry name" value="ALKYL/ARYL-SULFATASE"/>
    <property type="match status" value="1"/>
</dbReference>
<dbReference type="PANTHER" id="PTHR43223:SF1">
    <property type="entry name" value="ALKYL_ARYL-SULFATASE BDS1"/>
    <property type="match status" value="1"/>
</dbReference>
<dbReference type="Pfam" id="PF14864">
    <property type="entry name" value="Alkyl_sulf_C"/>
    <property type="match status" value="1"/>
</dbReference>
<dbReference type="Pfam" id="PF14863">
    <property type="entry name" value="Alkyl_sulf_dimr"/>
    <property type="match status" value="1"/>
</dbReference>
<dbReference type="Pfam" id="PF00753">
    <property type="entry name" value="Lactamase_B"/>
    <property type="match status" value="1"/>
</dbReference>
<dbReference type="SMART" id="SM00849">
    <property type="entry name" value="Lactamase_B"/>
    <property type="match status" value="1"/>
</dbReference>
<dbReference type="SUPFAM" id="SSF56281">
    <property type="entry name" value="Metallo-hydrolase/oxidoreductase"/>
    <property type="match status" value="1"/>
</dbReference>
<dbReference type="SUPFAM" id="SSF55718">
    <property type="entry name" value="SCP-like"/>
    <property type="match status" value="1"/>
</dbReference>
<sequence>MSRFIRASQRRTLLATLIAATLAQPLLAAESLDSKPASAITAAKNAEVLKNLPFADREEFEAAKRGLIAPFSGQIKNAEGQVVWDMGAYQFLNDKDAADTVNPSLWHQAQLNNIAGLFEVMPKLYQVRGLDPANMTIIEGDSGLVLIDTLTTAETARAALDLYFQHRPKKPIVAVVYSHSHIDHFGGARGIIDEADVKAGKVKVFAPSGFMEHAVSENILAGTAMARRGQYQSGVMVPRGAQAQVDSGLFKTTATNATNTLVAPNVLIEKPYERHTVDGVELEFQLTLGSEAPSDMNIYLPQFKVLNTADNAPPAMHNLLTPRGAEVRDAKAWAGYIDASLEKYGDRTDVLIQQHNWPVWGGDKVRTYLADQRDMYAFLNNRALNLMNKGLTLHEIAAEVSKLPGELDRKWYLRSYYGALSTNLRAVYQRYLGFYDGNPANLDPFPPVEAGKRYVEAMGGADAVLKQMRAAIDKGDYRWAVQLGNHLVFADPANKDARALQADAMEQLGYQTENALWRNMYMTGAMELRHGVPTYDSRGKSEMGRALTPDMFFDLLAIRLDTDKAVGHDMTLNWVFEDLKQDIALTLRNGVLTQRVGSLNPKADVTVKLTKPTLDQIAARKLDLPTAIKQGTVKLDGDGKKLGEFFGLLDSFSPKFNIVEPLE</sequence>
<keyword id="KW-0002">3D-structure</keyword>
<keyword id="KW-0378">Hydrolase</keyword>
<keyword id="KW-0479">Metal-binding</keyword>
<keyword id="KW-0732">Signal</keyword>
<keyword id="KW-0862">Zinc</keyword>
<gene>
    <name evidence="5" type="primary">pisa1</name>
</gene>
<comment type="function">
    <text evidence="2 3 4">Alkylsulfatase that catalyzes the enantioselective hydrolysis of secondary-alkylsulfates with strict inversion of configuration, leading to the formation of homochiral (S)-configurated alcohols and nonreacted sulfate esters (PubMed:21770430, PubMed:23061549, Ref.2). The substrate spectrum includes a range of linear, branched or cyclic sec-alkylsulfates (PubMed:21770430). Can use sec-alkylsulfate esters bearing aromatic, olefinic and acetylenic moieties (Ref.2). Acts by cleaving the C-O bond, resulting in inversion at the carbon (PubMed:23061549).</text>
</comment>
<comment type="catalytic activity">
    <reaction evidence="2 3 4">
        <text>an (R)-secondary-alkyl sulfate + H2O = an (S)-secondary-alcohol + sulfate.</text>
        <dbReference type="EC" id="3.1.6.19"/>
    </reaction>
</comment>
<comment type="biophysicochemical properties">
    <kinetics>
        <KM evidence="3">151 uM for (R)-2-octyl sulfate</KM>
        <KM evidence="3">651 uM for 1-octyl sulfate</KM>
        <text evidence="3">kcat is 262 min(-1) with (R)-2-octyl sulfate as substrate. kcat is 52 min(-1) with 1-octyl sulfate as substrate.</text>
    </kinetics>
    <temperatureDependence>
        <text evidence="4">Is very stable at 20-30 degrees Celsius.</text>
    </temperatureDependence>
</comment>
<comment type="subunit">
    <text evidence="3">Homodimer.</text>
</comment>
<comment type="miscellaneous">
    <text evidence="4">Is a very useful inverting alkylsulfatase for the deracemisation of rac-sec-alcohols via enzymatic hydrolysis of their corresponding sulfate esters, which furnishes homochiral products.</text>
</comment>
<comment type="similarity">
    <text evidence="8">Belongs to the metallo-beta-lactamase superfamily. Type III sulfatase family.</text>
</comment>
<protein>
    <recommendedName>
        <fullName evidence="8">(R)-specific secondary-alkylsulfatase</fullName>
        <shortName evidence="8">(R)-specific sec-alkylsulfatase</shortName>
        <ecNumber evidence="2 3 4">3.1.6.19</ecNumber>
    </recommendedName>
    <alternativeName>
        <fullName evidence="7">Inverting sec-alkylsulfatase Pisa1</fullName>
    </alternativeName>
    <alternativeName>
        <fullName evidence="6">Inverting secondary alkylsulfatase 1</fullName>
    </alternativeName>
    <alternativeName>
        <fullName evidence="8">Type III (R)-specific secondary-alkylsulfatase</fullName>
    </alternativeName>
</protein>
<organism>
    <name type="scientific">Pseudomonas sp</name>
    <dbReference type="NCBI Taxonomy" id="306"/>
    <lineage>
        <taxon>Bacteria</taxon>
        <taxon>Pseudomonadati</taxon>
        <taxon>Pseudomonadota</taxon>
        <taxon>Gammaproteobacteria</taxon>
        <taxon>Pseudomonadales</taxon>
        <taxon>Pseudomonadaceae</taxon>
        <taxon>Pseudomonas</taxon>
    </lineage>
</organism>
<proteinExistence type="evidence at protein level"/>
<accession>F8KAY7</accession>
<reference key="1">
    <citation type="journal article" date="2011" name="Org. Lett.">
        <title>A stereoselective inverting sec-alkylsulfatase for the deracemization of sec-alcohols.</title>
        <authorList>
            <person name="Schober M."/>
            <person name="Gadler P."/>
            <person name="Knaus T."/>
            <person name="Kayer H."/>
            <person name="Birner-Gruenberger R."/>
            <person name="Guelly C."/>
            <person name="Macheroux P."/>
            <person name="Wagner U."/>
            <person name="Faber K."/>
        </authorList>
    </citation>
    <scope>NUCLEOTIDE SEQUENCE [GENOMIC DNA]</scope>
    <scope>FUNCTION</scope>
    <scope>CATALYTIC ACTIVITY</scope>
    <source>
        <strain>DSM 6611</strain>
    </source>
</reference>
<reference key="2">
    <citation type="journal article" date="2012" name="Adv. Synth. Catal.">
        <title>The substrate spectrum of the inverting sec-alkylsulfatase Pisa1.</title>
        <authorList>
            <person name="Schober M."/>
            <person name="Knaus T."/>
            <person name="Toesch M."/>
            <person name="Macheroux P."/>
            <person name="Wagner U."/>
            <person name="Faber K."/>
        </authorList>
    </citation>
    <scope>FUNCTION</scope>
    <scope>CATALYTIC ACTIVITY</scope>
    <scope>BIOPHYSICOCHEMICAL PROPERTIES</scope>
    <source>
        <strain>DSM 6611</strain>
    </source>
</reference>
<reference evidence="9 10 11" key="3">
    <citation type="journal article" date="2012" name="FEBS J.">
        <title>Structure and mechanism of an inverting alkylsulfatase from Pseudomonas sp. DSM6611 specific for secondary alkyl sulfates.</title>
        <authorList>
            <person name="Knaus T."/>
            <person name="Schober M."/>
            <person name="Kepplinger B."/>
            <person name="Faccinelli M."/>
            <person name="Pitzer J."/>
            <person name="Faber K."/>
            <person name="Macheroux P."/>
            <person name="Wagner U."/>
        </authorList>
    </citation>
    <scope>X-RAY CRYSTALLOGRAPHY (2.70 ANGSTROMS) OF 1-660 IN COMPLEX WITH ZINC AND SULFATE</scope>
    <scope>FUNCTION</scope>
    <scope>CATALYTIC ACTIVITY</scope>
    <scope>REACTION MECHANISM</scope>
    <scope>BIOPHYSICOCHEMICAL PROPERTIES</scope>
    <scope>SUBUNIT</scope>
    <scope>MUTAGENESIS OF SER-233; PHE-250; HIS-317 AND TYR-417</scope>
    <source>
        <strain>DSM 6611</strain>
    </source>
</reference>